<gene>
    <name evidence="1" type="primary">ihfA</name>
    <name evidence="1" type="synonym">himA</name>
    <name type="ordered locus">MS1089</name>
</gene>
<dbReference type="EMBL" id="AE016827">
    <property type="protein sequence ID" value="AAU37696.1"/>
    <property type="molecule type" value="Genomic_DNA"/>
</dbReference>
<dbReference type="RefSeq" id="WP_011200264.1">
    <property type="nucleotide sequence ID" value="NC_006300.1"/>
</dbReference>
<dbReference type="SMR" id="Q65TL4"/>
<dbReference type="STRING" id="221988.MS1089"/>
<dbReference type="KEGG" id="msu:MS1089"/>
<dbReference type="eggNOG" id="COG0776">
    <property type="taxonomic scope" value="Bacteria"/>
</dbReference>
<dbReference type="HOGENOM" id="CLU_105066_1_3_6"/>
<dbReference type="OrthoDB" id="9797747at2"/>
<dbReference type="Proteomes" id="UP000000607">
    <property type="component" value="Chromosome"/>
</dbReference>
<dbReference type="GO" id="GO:0005829">
    <property type="term" value="C:cytosol"/>
    <property type="evidence" value="ECO:0007669"/>
    <property type="project" value="TreeGrafter"/>
</dbReference>
<dbReference type="GO" id="GO:0003677">
    <property type="term" value="F:DNA binding"/>
    <property type="evidence" value="ECO:0007669"/>
    <property type="project" value="UniProtKB-UniRule"/>
</dbReference>
<dbReference type="GO" id="GO:0030527">
    <property type="term" value="F:structural constituent of chromatin"/>
    <property type="evidence" value="ECO:0007669"/>
    <property type="project" value="InterPro"/>
</dbReference>
<dbReference type="GO" id="GO:0006310">
    <property type="term" value="P:DNA recombination"/>
    <property type="evidence" value="ECO:0007669"/>
    <property type="project" value="UniProtKB-UniRule"/>
</dbReference>
<dbReference type="GO" id="GO:0009893">
    <property type="term" value="P:positive regulation of metabolic process"/>
    <property type="evidence" value="ECO:0007669"/>
    <property type="project" value="UniProtKB-ARBA"/>
</dbReference>
<dbReference type="GO" id="GO:0006355">
    <property type="term" value="P:regulation of DNA-templated transcription"/>
    <property type="evidence" value="ECO:0007669"/>
    <property type="project" value="UniProtKB-UniRule"/>
</dbReference>
<dbReference type="GO" id="GO:0006417">
    <property type="term" value="P:regulation of translation"/>
    <property type="evidence" value="ECO:0007669"/>
    <property type="project" value="UniProtKB-UniRule"/>
</dbReference>
<dbReference type="CDD" id="cd13835">
    <property type="entry name" value="IHF_A"/>
    <property type="match status" value="1"/>
</dbReference>
<dbReference type="FunFam" id="4.10.520.10:FF:000002">
    <property type="entry name" value="Integration host factor subunit alpha"/>
    <property type="match status" value="1"/>
</dbReference>
<dbReference type="Gene3D" id="4.10.520.10">
    <property type="entry name" value="IHF-like DNA-binding proteins"/>
    <property type="match status" value="1"/>
</dbReference>
<dbReference type="HAMAP" id="MF_00380">
    <property type="entry name" value="IHF_alpha"/>
    <property type="match status" value="1"/>
</dbReference>
<dbReference type="InterPro" id="IPR000119">
    <property type="entry name" value="Hist_DNA-bd"/>
</dbReference>
<dbReference type="InterPro" id="IPR020816">
    <property type="entry name" value="Histone-like_DNA-bd_CS"/>
</dbReference>
<dbReference type="InterPro" id="IPR010992">
    <property type="entry name" value="IHF-like_DNA-bd_dom_sf"/>
</dbReference>
<dbReference type="InterPro" id="IPR005684">
    <property type="entry name" value="IHF_alpha"/>
</dbReference>
<dbReference type="NCBIfam" id="TIGR00987">
    <property type="entry name" value="himA"/>
    <property type="match status" value="1"/>
</dbReference>
<dbReference type="NCBIfam" id="NF001401">
    <property type="entry name" value="PRK00285.1"/>
    <property type="match status" value="1"/>
</dbReference>
<dbReference type="PANTHER" id="PTHR33175">
    <property type="entry name" value="DNA-BINDING PROTEIN HU"/>
    <property type="match status" value="1"/>
</dbReference>
<dbReference type="PANTHER" id="PTHR33175:SF2">
    <property type="entry name" value="INTEGRATION HOST FACTOR SUBUNIT ALPHA"/>
    <property type="match status" value="1"/>
</dbReference>
<dbReference type="Pfam" id="PF00216">
    <property type="entry name" value="Bac_DNA_binding"/>
    <property type="match status" value="1"/>
</dbReference>
<dbReference type="PRINTS" id="PR01727">
    <property type="entry name" value="DNABINDINGHU"/>
</dbReference>
<dbReference type="SMART" id="SM00411">
    <property type="entry name" value="BHL"/>
    <property type="match status" value="1"/>
</dbReference>
<dbReference type="SUPFAM" id="SSF47729">
    <property type="entry name" value="IHF-like DNA-binding proteins"/>
    <property type="match status" value="1"/>
</dbReference>
<dbReference type="PROSITE" id="PS00045">
    <property type="entry name" value="HISTONE_LIKE"/>
    <property type="match status" value="1"/>
</dbReference>
<name>IHFA_MANSM</name>
<proteinExistence type="inferred from homology"/>
<keyword id="KW-0233">DNA recombination</keyword>
<keyword id="KW-0238">DNA-binding</keyword>
<keyword id="KW-0804">Transcription</keyword>
<keyword id="KW-0805">Transcription regulation</keyword>
<keyword id="KW-0810">Translation regulation</keyword>
<protein>
    <recommendedName>
        <fullName evidence="1">Integration host factor subunit alpha</fullName>
        <shortName evidence="1">IHF-alpha</shortName>
    </recommendedName>
</protein>
<evidence type="ECO:0000255" key="1">
    <source>
        <dbReference type="HAMAP-Rule" id="MF_00380"/>
    </source>
</evidence>
<accession>Q65TL4</accession>
<feature type="chain" id="PRO_0000277741" description="Integration host factor subunit alpha">
    <location>
        <begin position="1"/>
        <end position="98"/>
    </location>
</feature>
<organism>
    <name type="scientific">Mannheimia succiniciproducens (strain KCTC 0769BP / MBEL55E)</name>
    <dbReference type="NCBI Taxonomy" id="221988"/>
    <lineage>
        <taxon>Bacteria</taxon>
        <taxon>Pseudomonadati</taxon>
        <taxon>Pseudomonadota</taxon>
        <taxon>Gammaproteobacteria</taxon>
        <taxon>Pasteurellales</taxon>
        <taxon>Pasteurellaceae</taxon>
        <taxon>Basfia</taxon>
    </lineage>
</organism>
<sequence length="98" mass="10948">MTLTKVELADNLIEKHGLNKSEAKALVEDFFEEIRVALEKGNDVKLSGFGNFELREKASRPGRNPKTGESVPVSARRVVVFKPGQKLRARVEKTKPKS</sequence>
<reference key="1">
    <citation type="journal article" date="2004" name="Nat. Biotechnol.">
        <title>The genome sequence of the capnophilic rumen bacterium Mannheimia succiniciproducens.</title>
        <authorList>
            <person name="Hong S.H."/>
            <person name="Kim J.S."/>
            <person name="Lee S.Y."/>
            <person name="In Y.H."/>
            <person name="Choi S.S."/>
            <person name="Rih J.-K."/>
            <person name="Kim C.H."/>
            <person name="Jeong H."/>
            <person name="Hur C.G."/>
            <person name="Kim J.J."/>
        </authorList>
    </citation>
    <scope>NUCLEOTIDE SEQUENCE [LARGE SCALE GENOMIC DNA]</scope>
    <source>
        <strain>KCTC 0769BP / MBEL55E</strain>
    </source>
</reference>
<comment type="function">
    <text evidence="1">This protein is one of the two subunits of integration host factor, a specific DNA-binding protein that functions in genetic recombination as well as in transcriptional and translational control.</text>
</comment>
<comment type="subunit">
    <text evidence="1">Heterodimer of an alpha and a beta chain.</text>
</comment>
<comment type="similarity">
    <text evidence="1">Belongs to the bacterial histone-like protein family.</text>
</comment>